<name>AROB_LACLS</name>
<dbReference type="EC" id="4.2.3.4" evidence="1"/>
<dbReference type="EMBL" id="CP000425">
    <property type="protein sequence ID" value="ABJ73404.1"/>
    <property type="molecule type" value="Genomic_DNA"/>
</dbReference>
<dbReference type="RefSeq" id="WP_011676752.1">
    <property type="nucleotide sequence ID" value="NC_008527.1"/>
</dbReference>
<dbReference type="SMR" id="Q02XB8"/>
<dbReference type="KEGG" id="llc:LACR_1920"/>
<dbReference type="HOGENOM" id="CLU_001201_0_1_9"/>
<dbReference type="UniPathway" id="UPA00053">
    <property type="reaction ID" value="UER00085"/>
</dbReference>
<dbReference type="Proteomes" id="UP000000240">
    <property type="component" value="Chromosome"/>
</dbReference>
<dbReference type="GO" id="GO:0005737">
    <property type="term" value="C:cytoplasm"/>
    <property type="evidence" value="ECO:0007669"/>
    <property type="project" value="UniProtKB-SubCell"/>
</dbReference>
<dbReference type="GO" id="GO:0003856">
    <property type="term" value="F:3-dehydroquinate synthase activity"/>
    <property type="evidence" value="ECO:0007669"/>
    <property type="project" value="UniProtKB-UniRule"/>
</dbReference>
<dbReference type="GO" id="GO:0046872">
    <property type="term" value="F:metal ion binding"/>
    <property type="evidence" value="ECO:0007669"/>
    <property type="project" value="UniProtKB-KW"/>
</dbReference>
<dbReference type="GO" id="GO:0000166">
    <property type="term" value="F:nucleotide binding"/>
    <property type="evidence" value="ECO:0007669"/>
    <property type="project" value="UniProtKB-KW"/>
</dbReference>
<dbReference type="GO" id="GO:0008652">
    <property type="term" value="P:amino acid biosynthetic process"/>
    <property type="evidence" value="ECO:0007669"/>
    <property type="project" value="UniProtKB-KW"/>
</dbReference>
<dbReference type="GO" id="GO:0009073">
    <property type="term" value="P:aromatic amino acid family biosynthetic process"/>
    <property type="evidence" value="ECO:0007669"/>
    <property type="project" value="UniProtKB-KW"/>
</dbReference>
<dbReference type="GO" id="GO:0009423">
    <property type="term" value="P:chorismate biosynthetic process"/>
    <property type="evidence" value="ECO:0007669"/>
    <property type="project" value="UniProtKB-UniRule"/>
</dbReference>
<dbReference type="CDD" id="cd08195">
    <property type="entry name" value="DHQS"/>
    <property type="match status" value="1"/>
</dbReference>
<dbReference type="FunFam" id="3.40.50.1970:FF:000007">
    <property type="entry name" value="Pentafunctional AROM polypeptide"/>
    <property type="match status" value="1"/>
</dbReference>
<dbReference type="Gene3D" id="3.40.50.1970">
    <property type="match status" value="1"/>
</dbReference>
<dbReference type="Gene3D" id="1.20.1090.10">
    <property type="entry name" value="Dehydroquinate synthase-like - alpha domain"/>
    <property type="match status" value="1"/>
</dbReference>
<dbReference type="HAMAP" id="MF_00110">
    <property type="entry name" value="DHQ_synthase"/>
    <property type="match status" value="1"/>
</dbReference>
<dbReference type="InterPro" id="IPR050071">
    <property type="entry name" value="Dehydroquinate_synthase"/>
</dbReference>
<dbReference type="InterPro" id="IPR016037">
    <property type="entry name" value="DHQ_synth_AroB"/>
</dbReference>
<dbReference type="InterPro" id="IPR030963">
    <property type="entry name" value="DHQ_synth_fam"/>
</dbReference>
<dbReference type="InterPro" id="IPR030960">
    <property type="entry name" value="DHQS/DOIS_N"/>
</dbReference>
<dbReference type="InterPro" id="IPR056179">
    <property type="entry name" value="DHQS_C"/>
</dbReference>
<dbReference type="NCBIfam" id="TIGR01357">
    <property type="entry name" value="aroB"/>
    <property type="match status" value="1"/>
</dbReference>
<dbReference type="PANTHER" id="PTHR43622">
    <property type="entry name" value="3-DEHYDROQUINATE SYNTHASE"/>
    <property type="match status" value="1"/>
</dbReference>
<dbReference type="PANTHER" id="PTHR43622:SF7">
    <property type="entry name" value="3-DEHYDROQUINATE SYNTHASE, CHLOROPLASTIC"/>
    <property type="match status" value="1"/>
</dbReference>
<dbReference type="Pfam" id="PF01761">
    <property type="entry name" value="DHQ_synthase"/>
    <property type="match status" value="1"/>
</dbReference>
<dbReference type="Pfam" id="PF24621">
    <property type="entry name" value="DHQS_C"/>
    <property type="match status" value="1"/>
</dbReference>
<dbReference type="PIRSF" id="PIRSF001455">
    <property type="entry name" value="DHQ_synth"/>
    <property type="match status" value="1"/>
</dbReference>
<dbReference type="SUPFAM" id="SSF56796">
    <property type="entry name" value="Dehydroquinate synthase-like"/>
    <property type="match status" value="1"/>
</dbReference>
<proteinExistence type="inferred from homology"/>
<gene>
    <name evidence="1" type="primary">aroB</name>
    <name type="ordered locus">LACR_1920</name>
</gene>
<comment type="function">
    <text evidence="1">Catalyzes the conversion of 3-deoxy-D-arabino-heptulosonate 7-phosphate (DAHP) to dehydroquinate (DHQ).</text>
</comment>
<comment type="catalytic activity">
    <reaction evidence="1">
        <text>7-phospho-2-dehydro-3-deoxy-D-arabino-heptonate = 3-dehydroquinate + phosphate</text>
        <dbReference type="Rhea" id="RHEA:21968"/>
        <dbReference type="ChEBI" id="CHEBI:32364"/>
        <dbReference type="ChEBI" id="CHEBI:43474"/>
        <dbReference type="ChEBI" id="CHEBI:58394"/>
        <dbReference type="EC" id="4.2.3.4"/>
    </reaction>
</comment>
<comment type="cofactor">
    <cofactor evidence="1">
        <name>Co(2+)</name>
        <dbReference type="ChEBI" id="CHEBI:48828"/>
    </cofactor>
    <cofactor evidence="1">
        <name>Zn(2+)</name>
        <dbReference type="ChEBI" id="CHEBI:29105"/>
    </cofactor>
    <text evidence="1">Binds 1 divalent metal cation per subunit. Can use either Co(2+) or Zn(2+).</text>
</comment>
<comment type="cofactor">
    <cofactor evidence="1">
        <name>NAD(+)</name>
        <dbReference type="ChEBI" id="CHEBI:57540"/>
    </cofactor>
</comment>
<comment type="pathway">
    <text evidence="1">Metabolic intermediate biosynthesis; chorismate biosynthesis; chorismate from D-erythrose 4-phosphate and phosphoenolpyruvate: step 2/7.</text>
</comment>
<comment type="subcellular location">
    <subcellularLocation>
        <location evidence="1">Cytoplasm</location>
    </subcellularLocation>
</comment>
<comment type="similarity">
    <text evidence="1">Belongs to the sugar phosphate cyclases superfamily. Dehydroquinate synthase family.</text>
</comment>
<accession>Q02XB8</accession>
<sequence length="356" mass="39239">MKLNVNLPDHPYDVIIENGALANIGNWVSSLWKKQKIVLISDNHVNGLYGQKVVEQLEKSGFEVETFEFPEGEASKNLLTAEKAWNFCAEFGLTRSDGIIAFGGGVTGDLAGFVASTYMRGIHFLQIPTSLTAQVDSSIGGKTGINSKMAKNMIGTFTQPDGVLIDPEVLKTLGQREFCEGLGEVIKCALIADKALWNLLTDLSAKDLLENFAKIEEIIYRSCEVKRKVVVDDVLDNGVRLYLNFGHTIGHAVENTAGYGKVMHGEAVAIGMVQISKIAEKKGLMPLGITDEIRKMVKKYGLPDDYQPWDEALLFKALTHDKKARGTIIKTVIVPEIGTAKINEVTFEEMKEYLKK</sequence>
<protein>
    <recommendedName>
        <fullName evidence="1">3-dehydroquinate synthase</fullName>
        <shortName evidence="1">DHQS</shortName>
        <ecNumber evidence="1">4.2.3.4</ecNumber>
    </recommendedName>
</protein>
<reference key="1">
    <citation type="journal article" date="2006" name="Proc. Natl. Acad. Sci. U.S.A.">
        <title>Comparative genomics of the lactic acid bacteria.</title>
        <authorList>
            <person name="Makarova K.S."/>
            <person name="Slesarev A."/>
            <person name="Wolf Y.I."/>
            <person name="Sorokin A."/>
            <person name="Mirkin B."/>
            <person name="Koonin E.V."/>
            <person name="Pavlov A."/>
            <person name="Pavlova N."/>
            <person name="Karamychev V."/>
            <person name="Polouchine N."/>
            <person name="Shakhova V."/>
            <person name="Grigoriev I."/>
            <person name="Lou Y."/>
            <person name="Rohksar D."/>
            <person name="Lucas S."/>
            <person name="Huang K."/>
            <person name="Goodstein D.M."/>
            <person name="Hawkins T."/>
            <person name="Plengvidhya V."/>
            <person name="Welker D."/>
            <person name="Hughes J."/>
            <person name="Goh Y."/>
            <person name="Benson A."/>
            <person name="Baldwin K."/>
            <person name="Lee J.-H."/>
            <person name="Diaz-Muniz I."/>
            <person name="Dosti B."/>
            <person name="Smeianov V."/>
            <person name="Wechter W."/>
            <person name="Barabote R."/>
            <person name="Lorca G."/>
            <person name="Altermann E."/>
            <person name="Barrangou R."/>
            <person name="Ganesan B."/>
            <person name="Xie Y."/>
            <person name="Rawsthorne H."/>
            <person name="Tamir D."/>
            <person name="Parker C."/>
            <person name="Breidt F."/>
            <person name="Broadbent J.R."/>
            <person name="Hutkins R."/>
            <person name="O'Sullivan D."/>
            <person name="Steele J."/>
            <person name="Unlu G."/>
            <person name="Saier M.H. Jr."/>
            <person name="Klaenhammer T."/>
            <person name="Richardson P."/>
            <person name="Kozyavkin S."/>
            <person name="Weimer B.C."/>
            <person name="Mills D.A."/>
        </authorList>
    </citation>
    <scope>NUCLEOTIDE SEQUENCE [LARGE SCALE GENOMIC DNA]</scope>
    <source>
        <strain>SK11</strain>
    </source>
</reference>
<organism>
    <name type="scientific">Lactococcus lactis subsp. cremoris (strain SK11)</name>
    <dbReference type="NCBI Taxonomy" id="272622"/>
    <lineage>
        <taxon>Bacteria</taxon>
        <taxon>Bacillati</taxon>
        <taxon>Bacillota</taxon>
        <taxon>Bacilli</taxon>
        <taxon>Lactobacillales</taxon>
        <taxon>Streptococcaceae</taxon>
        <taxon>Lactococcus</taxon>
        <taxon>Lactococcus cremoris subsp. cremoris</taxon>
    </lineage>
</organism>
<keyword id="KW-0028">Amino-acid biosynthesis</keyword>
<keyword id="KW-0057">Aromatic amino acid biosynthesis</keyword>
<keyword id="KW-0170">Cobalt</keyword>
<keyword id="KW-0963">Cytoplasm</keyword>
<keyword id="KW-0456">Lyase</keyword>
<keyword id="KW-0479">Metal-binding</keyword>
<keyword id="KW-0520">NAD</keyword>
<keyword id="KW-0547">Nucleotide-binding</keyword>
<keyword id="KW-0862">Zinc</keyword>
<feature type="chain" id="PRO_1000094539" description="3-dehydroquinate synthase">
    <location>
        <begin position="1"/>
        <end position="356"/>
    </location>
</feature>
<feature type="binding site" evidence="1">
    <location>
        <begin position="71"/>
        <end position="76"/>
    </location>
    <ligand>
        <name>NAD(+)</name>
        <dbReference type="ChEBI" id="CHEBI:57540"/>
    </ligand>
</feature>
<feature type="binding site" evidence="1">
    <location>
        <begin position="105"/>
        <end position="109"/>
    </location>
    <ligand>
        <name>NAD(+)</name>
        <dbReference type="ChEBI" id="CHEBI:57540"/>
    </ligand>
</feature>
<feature type="binding site" evidence="1">
    <location>
        <begin position="129"/>
        <end position="130"/>
    </location>
    <ligand>
        <name>NAD(+)</name>
        <dbReference type="ChEBI" id="CHEBI:57540"/>
    </ligand>
</feature>
<feature type="binding site" evidence="1">
    <location>
        <position position="142"/>
    </location>
    <ligand>
        <name>NAD(+)</name>
        <dbReference type="ChEBI" id="CHEBI:57540"/>
    </ligand>
</feature>
<feature type="binding site" evidence="1">
    <location>
        <position position="151"/>
    </location>
    <ligand>
        <name>NAD(+)</name>
        <dbReference type="ChEBI" id="CHEBI:57540"/>
    </ligand>
</feature>
<feature type="binding site" evidence="1">
    <location>
        <position position="184"/>
    </location>
    <ligand>
        <name>Zn(2+)</name>
        <dbReference type="ChEBI" id="CHEBI:29105"/>
    </ligand>
</feature>
<feature type="binding site" evidence="1">
    <location>
        <position position="247"/>
    </location>
    <ligand>
        <name>Zn(2+)</name>
        <dbReference type="ChEBI" id="CHEBI:29105"/>
    </ligand>
</feature>
<feature type="binding site" evidence="1">
    <location>
        <position position="264"/>
    </location>
    <ligand>
        <name>Zn(2+)</name>
        <dbReference type="ChEBI" id="CHEBI:29105"/>
    </ligand>
</feature>
<evidence type="ECO:0000255" key="1">
    <source>
        <dbReference type="HAMAP-Rule" id="MF_00110"/>
    </source>
</evidence>